<organism>
    <name type="scientific">Homo sapiens</name>
    <name type="common">Human</name>
    <dbReference type="NCBI Taxonomy" id="9606"/>
    <lineage>
        <taxon>Eukaryota</taxon>
        <taxon>Metazoa</taxon>
        <taxon>Chordata</taxon>
        <taxon>Craniata</taxon>
        <taxon>Vertebrata</taxon>
        <taxon>Euteleostomi</taxon>
        <taxon>Mammalia</taxon>
        <taxon>Eutheria</taxon>
        <taxon>Euarchontoglires</taxon>
        <taxon>Primates</taxon>
        <taxon>Haplorrhini</taxon>
        <taxon>Catarrhini</taxon>
        <taxon>Hominidae</taxon>
        <taxon>Homo</taxon>
    </lineage>
</organism>
<evidence type="ECO:0000250" key="1"/>
<evidence type="ECO:0000255" key="2"/>
<evidence type="ECO:0000256" key="3">
    <source>
        <dbReference type="SAM" id="MobiDB-lite"/>
    </source>
</evidence>
<evidence type="ECO:0000269" key="4">
    <source>
    </source>
</evidence>
<evidence type="ECO:0000305" key="5"/>
<reference key="1">
    <citation type="journal article" date="2004" name="Genome Res.">
        <title>The status, quality, and expansion of the NIH full-length cDNA project: the Mammalian Gene Collection (MGC).</title>
        <authorList>
            <consortium name="The MGC Project Team"/>
        </authorList>
    </citation>
    <scope>NUCLEOTIDE SEQUENCE [LARGE SCALE MRNA]</scope>
    <source>
        <tissue>Brain</tissue>
    </source>
</reference>
<reference key="2">
    <citation type="journal article" date="2003" name="Gene">
        <title>Shadoo, a new protein highly conserved from fish to mammals and with similarity to prion protein.</title>
        <authorList>
            <person name="Premzl M."/>
            <person name="Sangiorgio L."/>
            <person name="Strumbo B."/>
            <person name="Marshall Graves J.A."/>
            <person name="Simonic T."/>
            <person name="Gready J.E."/>
        </authorList>
    </citation>
    <scope>IDENTIFICATION</scope>
    <scope>TISSUE SPECIFICITY</scope>
</reference>
<reference key="3">
    <citation type="journal article" date="2004" name="Mol. Biol. Evol.">
        <title>Evolution of vertebrate genes related to prion and Shadoo proteins-Clues from comparative genomic analysis.</title>
        <authorList>
            <person name="Premzl M."/>
            <person name="Gready J.E."/>
            <person name="Jermiin L.S."/>
            <person name="Simonic T."/>
            <person name="Marshall Graves J.A."/>
        </authorList>
    </citation>
    <scope>PHYLOGENY</scope>
</reference>
<reference key="4">
    <citation type="journal article" date="2007" name="BMC Genomics">
        <title>Comparative genomic analysis of prion genes.</title>
        <authorList>
            <person name="Premzl M."/>
            <person name="Gamulin V."/>
        </authorList>
    </citation>
    <scope>PHYLOGENY</scope>
</reference>
<name>SPRN_HUMAN</name>
<dbReference type="EMBL" id="BC040198">
    <property type="protein sequence ID" value="AAH40198.1"/>
    <property type="molecule type" value="mRNA"/>
</dbReference>
<dbReference type="EMBL" id="BN000518">
    <property type="protein sequence ID" value="CAG34288.1"/>
    <property type="molecule type" value="Genomic_DNA"/>
</dbReference>
<dbReference type="CCDS" id="CCDS53589.1"/>
<dbReference type="RefSeq" id="NP_001012526.2">
    <property type="nucleotide sequence ID" value="NM_001012508.6"/>
</dbReference>
<dbReference type="RefSeq" id="NP_001378903.1">
    <property type="nucleotide sequence ID" value="NM_001391974.1"/>
</dbReference>
<dbReference type="BioGRID" id="139012">
    <property type="interactions" value="1"/>
</dbReference>
<dbReference type="FunCoup" id="Q5BIV9">
    <property type="interactions" value="2"/>
</dbReference>
<dbReference type="IntAct" id="Q5BIV9">
    <property type="interactions" value="1"/>
</dbReference>
<dbReference type="STRING" id="9606.ENSP00000433712"/>
<dbReference type="TCDB" id="1.C.48.1.5">
    <property type="family name" value="the prion peptide (prp) family"/>
</dbReference>
<dbReference type="GlyCosmos" id="Q5BIV9">
    <property type="glycosylation" value="1 site, No reported glycans"/>
</dbReference>
<dbReference type="GlyGen" id="Q5BIV9">
    <property type="glycosylation" value="2 sites"/>
</dbReference>
<dbReference type="iPTMnet" id="Q5BIV9"/>
<dbReference type="PhosphoSitePlus" id="Q5BIV9"/>
<dbReference type="BioMuta" id="SPRN"/>
<dbReference type="DMDM" id="74722519"/>
<dbReference type="MassIVE" id="Q5BIV9"/>
<dbReference type="PaxDb" id="9606-ENSP00000433712"/>
<dbReference type="PeptideAtlas" id="Q5BIV9"/>
<dbReference type="ProteomicsDB" id="62673"/>
<dbReference type="Antibodypedia" id="55899">
    <property type="antibodies" value="95 antibodies from 16 providers"/>
</dbReference>
<dbReference type="DNASU" id="503542"/>
<dbReference type="Ensembl" id="ENST00000414069.2">
    <property type="protein sequence ID" value="ENSP00000433712.1"/>
    <property type="gene ID" value="ENSG00000203772.8"/>
</dbReference>
<dbReference type="Ensembl" id="ENST00000685335.1">
    <property type="protein sequence ID" value="ENSP00000510252.1"/>
    <property type="gene ID" value="ENSG00000203772.8"/>
</dbReference>
<dbReference type="GeneID" id="503542"/>
<dbReference type="KEGG" id="hsa:503542"/>
<dbReference type="MANE-Select" id="ENST00000685335.1">
    <property type="protein sequence ID" value="ENSP00000510252.1"/>
    <property type="RefSeq nucleotide sequence ID" value="NM_001391974.1"/>
    <property type="RefSeq protein sequence ID" value="NP_001378903.1"/>
</dbReference>
<dbReference type="UCSC" id="uc001lnf.5">
    <property type="organism name" value="human"/>
</dbReference>
<dbReference type="AGR" id="HGNC:16871"/>
<dbReference type="CTD" id="503542"/>
<dbReference type="DisGeNET" id="503542"/>
<dbReference type="GeneCards" id="SPRN"/>
<dbReference type="HGNC" id="HGNC:16871">
    <property type="gene designation" value="SPRN"/>
</dbReference>
<dbReference type="HPA" id="ENSG00000203772">
    <property type="expression patterns" value="Tissue enhanced (brain, liver)"/>
</dbReference>
<dbReference type="MIM" id="610447">
    <property type="type" value="gene"/>
</dbReference>
<dbReference type="neXtProt" id="NX_Q5BIV9"/>
<dbReference type="OpenTargets" id="ENSG00000203772"/>
<dbReference type="PharmGKB" id="PA142670876"/>
<dbReference type="VEuPathDB" id="HostDB:ENSG00000203772"/>
<dbReference type="eggNOG" id="ENOG502SCEE">
    <property type="taxonomic scope" value="Eukaryota"/>
</dbReference>
<dbReference type="GeneTree" id="ENSGT00730000111694"/>
<dbReference type="HOGENOM" id="CLU_1776846_0_0_1"/>
<dbReference type="InParanoid" id="Q5BIV9"/>
<dbReference type="OMA" id="MNWAPAT"/>
<dbReference type="PAN-GO" id="Q5BIV9">
    <property type="GO annotations" value="3 GO annotations based on evolutionary models"/>
</dbReference>
<dbReference type="PhylomeDB" id="Q5BIV9"/>
<dbReference type="TreeFam" id="TF330766"/>
<dbReference type="PathwayCommons" id="Q5BIV9"/>
<dbReference type="Reactome" id="R-HSA-163125">
    <property type="pathway name" value="Post-translational modification: synthesis of GPI-anchored proteins"/>
</dbReference>
<dbReference type="SignaLink" id="Q5BIV9"/>
<dbReference type="BioGRID-ORCS" id="503542">
    <property type="hits" value="9 hits in 1155 CRISPR screens"/>
</dbReference>
<dbReference type="ChiTaRS" id="SPRN">
    <property type="organism name" value="human"/>
</dbReference>
<dbReference type="GenomeRNAi" id="503542"/>
<dbReference type="Pharos" id="Q5BIV9">
    <property type="development level" value="Tbio"/>
</dbReference>
<dbReference type="PRO" id="PR:Q5BIV9"/>
<dbReference type="Proteomes" id="UP000005640">
    <property type="component" value="Chromosome 10"/>
</dbReference>
<dbReference type="RNAct" id="Q5BIV9">
    <property type="molecule type" value="protein"/>
</dbReference>
<dbReference type="Bgee" id="ENSG00000203772">
    <property type="expression patterns" value="Expressed in pancreatic ductal cell and 131 other cell types or tissues"/>
</dbReference>
<dbReference type="GO" id="GO:0005829">
    <property type="term" value="C:cytosol"/>
    <property type="evidence" value="ECO:0007669"/>
    <property type="project" value="Ensembl"/>
</dbReference>
<dbReference type="GO" id="GO:0005576">
    <property type="term" value="C:extracellular region"/>
    <property type="evidence" value="ECO:0000304"/>
    <property type="project" value="Reactome"/>
</dbReference>
<dbReference type="GO" id="GO:0005730">
    <property type="term" value="C:nucleolus"/>
    <property type="evidence" value="ECO:0007669"/>
    <property type="project" value="Ensembl"/>
</dbReference>
<dbReference type="GO" id="GO:0005634">
    <property type="term" value="C:nucleus"/>
    <property type="evidence" value="ECO:0000318"/>
    <property type="project" value="GO_Central"/>
</dbReference>
<dbReference type="GO" id="GO:0005886">
    <property type="term" value="C:plasma membrane"/>
    <property type="evidence" value="ECO:0000304"/>
    <property type="project" value="Reactome"/>
</dbReference>
<dbReference type="GO" id="GO:0098552">
    <property type="term" value="C:side of membrane"/>
    <property type="evidence" value="ECO:0007669"/>
    <property type="project" value="UniProtKB-KW"/>
</dbReference>
<dbReference type="GO" id="GO:0031982">
    <property type="term" value="C:vesicle"/>
    <property type="evidence" value="ECO:0007669"/>
    <property type="project" value="Ensembl"/>
</dbReference>
<dbReference type="GO" id="GO:0003676">
    <property type="term" value="F:nucleic acid binding"/>
    <property type="evidence" value="ECO:0000318"/>
    <property type="project" value="GO_Central"/>
</dbReference>
<dbReference type="GO" id="GO:0006606">
    <property type="term" value="P:protein import into nucleus"/>
    <property type="evidence" value="ECO:0000318"/>
    <property type="project" value="GO_Central"/>
</dbReference>
<dbReference type="InterPro" id="IPR029238">
    <property type="entry name" value="Shadoo"/>
</dbReference>
<dbReference type="PANTHER" id="PTHR28552">
    <property type="entry name" value="SHADOW OF PRION PROTEIN"/>
    <property type="match status" value="1"/>
</dbReference>
<dbReference type="PANTHER" id="PTHR28552:SF1">
    <property type="entry name" value="SHADOW OF PRION PROTEIN"/>
    <property type="match status" value="1"/>
</dbReference>
<dbReference type="Pfam" id="PF14999">
    <property type="entry name" value="Shadoo"/>
    <property type="match status" value="1"/>
</dbReference>
<sequence>MNWAPATCWALLLAAAFLCDSGAAKGGRGGARGSARGGVRGGARGASRVRVRPAQRYGAPGSSLRVAAAGAAAGAAAGAAAGLAAGSGWRRAAGPGERGLEDEEDGVPGGNGTGPGIYSYRAWTSGAGPTRGPRLCLVLGGALGALGLLRP</sequence>
<feature type="signal peptide" evidence="2">
    <location>
        <begin position="1"/>
        <end position="24"/>
    </location>
</feature>
<feature type="chain" id="PRO_5000096015" description="Shadow of prion protein">
    <location>
        <begin position="25"/>
        <end position="126"/>
    </location>
</feature>
<feature type="propeptide" id="PRO_0000320166" description="Removed in mature form" evidence="2">
    <location>
        <begin position="127"/>
        <end position="151"/>
    </location>
</feature>
<feature type="region of interest" description="Disordered" evidence="3">
    <location>
        <begin position="89"/>
        <end position="113"/>
    </location>
</feature>
<feature type="lipid moiety-binding region" description="GPI-anchor amidated glycine" evidence="2">
    <location>
        <position position="126"/>
    </location>
</feature>
<feature type="glycosylation site" description="N-linked (GlcNAc...) asparagine" evidence="2">
    <location>
        <position position="111"/>
    </location>
</feature>
<feature type="sequence variant" id="VAR_039152" description="In dbSNP:rs2492666.">
    <original>T</original>
    <variation>M</variation>
    <location>
        <position position="7"/>
    </location>
</feature>
<keyword id="KW-0034">Amyloid</keyword>
<keyword id="KW-1003">Cell membrane</keyword>
<keyword id="KW-0325">Glycoprotein</keyword>
<keyword id="KW-0336">GPI-anchor</keyword>
<keyword id="KW-0449">Lipoprotein</keyword>
<keyword id="KW-0472">Membrane</keyword>
<keyword id="KW-0640">Prion</keyword>
<keyword id="KW-1267">Proteomics identification</keyword>
<keyword id="KW-1185">Reference proteome</keyword>
<keyword id="KW-0732">Signal</keyword>
<proteinExistence type="evidence at protein level"/>
<comment type="function">
    <text evidence="1">Prion-like protein that has PrP(C)-like neuroprotective activity. May act as a modulator for the biological actions of normal and abnormal PrP (By similarity).</text>
</comment>
<comment type="subcellular location">
    <subcellularLocation>
        <location evidence="1">Cell membrane</location>
        <topology evidence="1">Lipid-anchor</topology>
        <topology evidence="1">GPI-anchor</topology>
    </subcellularLocation>
</comment>
<comment type="tissue specificity">
    <text evidence="4">Mainly expressed in brain. In brain, it is expressed in hippocampus.</text>
</comment>
<comment type="PTM">
    <text evidence="1">N-glycosylated.</text>
</comment>
<comment type="miscellaneous">
    <text>'Shadoo' means 'shadow' in Japanese.</text>
</comment>
<comment type="similarity">
    <text evidence="5">Belongs to the SPRN family.</text>
</comment>
<accession>Q5BIV9</accession>
<protein>
    <recommendedName>
        <fullName>Shadow of prion protein</fullName>
        <shortName>Protein shadoo</shortName>
    </recommendedName>
</protein>
<gene>
    <name type="primary">SPRN</name>
    <name type="synonym">SHO</name>
</gene>